<proteinExistence type="inferred from homology"/>
<name>DCUP_ECOUT</name>
<dbReference type="EC" id="4.1.1.37" evidence="1"/>
<dbReference type="EMBL" id="CP000243">
    <property type="protein sequence ID" value="ABE09251.1"/>
    <property type="molecule type" value="Genomic_DNA"/>
</dbReference>
<dbReference type="RefSeq" id="WP_000137653.1">
    <property type="nucleotide sequence ID" value="NZ_CP064825.1"/>
</dbReference>
<dbReference type="SMR" id="Q1R5W3"/>
<dbReference type="KEGG" id="eci:UTI89_C3822"/>
<dbReference type="HOGENOM" id="CLU_040933_0_0_6"/>
<dbReference type="UniPathway" id="UPA00251">
    <property type="reaction ID" value="UER00321"/>
</dbReference>
<dbReference type="Proteomes" id="UP000001952">
    <property type="component" value="Chromosome"/>
</dbReference>
<dbReference type="GO" id="GO:0005829">
    <property type="term" value="C:cytosol"/>
    <property type="evidence" value="ECO:0007669"/>
    <property type="project" value="TreeGrafter"/>
</dbReference>
<dbReference type="GO" id="GO:0004853">
    <property type="term" value="F:uroporphyrinogen decarboxylase activity"/>
    <property type="evidence" value="ECO:0007669"/>
    <property type="project" value="UniProtKB-UniRule"/>
</dbReference>
<dbReference type="GO" id="GO:0019353">
    <property type="term" value="P:protoporphyrinogen IX biosynthetic process from glutamate"/>
    <property type="evidence" value="ECO:0007669"/>
    <property type="project" value="TreeGrafter"/>
</dbReference>
<dbReference type="CDD" id="cd00717">
    <property type="entry name" value="URO-D"/>
    <property type="match status" value="1"/>
</dbReference>
<dbReference type="FunFam" id="3.20.20.210:FF:000001">
    <property type="entry name" value="Uroporphyrinogen decarboxylase"/>
    <property type="match status" value="1"/>
</dbReference>
<dbReference type="Gene3D" id="3.20.20.210">
    <property type="match status" value="1"/>
</dbReference>
<dbReference type="HAMAP" id="MF_00218">
    <property type="entry name" value="URO_D"/>
    <property type="match status" value="1"/>
</dbReference>
<dbReference type="InterPro" id="IPR038071">
    <property type="entry name" value="UROD/MetE-like_sf"/>
</dbReference>
<dbReference type="InterPro" id="IPR006361">
    <property type="entry name" value="Uroporphyrinogen_deCO2ase_HemE"/>
</dbReference>
<dbReference type="InterPro" id="IPR000257">
    <property type="entry name" value="Uroporphyrinogen_deCOase"/>
</dbReference>
<dbReference type="NCBIfam" id="TIGR01464">
    <property type="entry name" value="hemE"/>
    <property type="match status" value="1"/>
</dbReference>
<dbReference type="PANTHER" id="PTHR21091">
    <property type="entry name" value="METHYLTETRAHYDROFOLATE:HOMOCYSTEINE METHYLTRANSFERASE RELATED"/>
    <property type="match status" value="1"/>
</dbReference>
<dbReference type="PANTHER" id="PTHR21091:SF169">
    <property type="entry name" value="UROPORPHYRINOGEN DECARBOXYLASE"/>
    <property type="match status" value="1"/>
</dbReference>
<dbReference type="Pfam" id="PF01208">
    <property type="entry name" value="URO-D"/>
    <property type="match status" value="1"/>
</dbReference>
<dbReference type="SUPFAM" id="SSF51726">
    <property type="entry name" value="UROD/MetE-like"/>
    <property type="match status" value="1"/>
</dbReference>
<dbReference type="PROSITE" id="PS00906">
    <property type="entry name" value="UROD_1"/>
    <property type="match status" value="1"/>
</dbReference>
<dbReference type="PROSITE" id="PS00907">
    <property type="entry name" value="UROD_2"/>
    <property type="match status" value="1"/>
</dbReference>
<keyword id="KW-0963">Cytoplasm</keyword>
<keyword id="KW-0210">Decarboxylase</keyword>
<keyword id="KW-0456">Lyase</keyword>
<keyword id="KW-0627">Porphyrin biosynthesis</keyword>
<reference key="1">
    <citation type="journal article" date="2006" name="Proc. Natl. Acad. Sci. U.S.A.">
        <title>Identification of genes subject to positive selection in uropathogenic strains of Escherichia coli: a comparative genomics approach.</title>
        <authorList>
            <person name="Chen S.L."/>
            <person name="Hung C.-S."/>
            <person name="Xu J."/>
            <person name="Reigstad C.S."/>
            <person name="Magrini V."/>
            <person name="Sabo A."/>
            <person name="Blasiar D."/>
            <person name="Bieri T."/>
            <person name="Meyer R.R."/>
            <person name="Ozersky P."/>
            <person name="Armstrong J.R."/>
            <person name="Fulton R.S."/>
            <person name="Latreille J.P."/>
            <person name="Spieth J."/>
            <person name="Hooton T.M."/>
            <person name="Mardis E.R."/>
            <person name="Hultgren S.J."/>
            <person name="Gordon J.I."/>
        </authorList>
    </citation>
    <scope>NUCLEOTIDE SEQUENCE [LARGE SCALE GENOMIC DNA]</scope>
    <source>
        <strain>UTI89 / UPEC</strain>
    </source>
</reference>
<gene>
    <name evidence="1" type="primary">hemE</name>
    <name type="ordered locus">UTI89_C3822</name>
</gene>
<organism>
    <name type="scientific">Escherichia coli (strain UTI89 / UPEC)</name>
    <dbReference type="NCBI Taxonomy" id="364106"/>
    <lineage>
        <taxon>Bacteria</taxon>
        <taxon>Pseudomonadati</taxon>
        <taxon>Pseudomonadota</taxon>
        <taxon>Gammaproteobacteria</taxon>
        <taxon>Enterobacterales</taxon>
        <taxon>Enterobacteriaceae</taxon>
        <taxon>Escherichia</taxon>
    </lineage>
</organism>
<comment type="function">
    <text evidence="1">Catalyzes the decarboxylation of four acetate groups of uroporphyrinogen-III to yield coproporphyrinogen-III.</text>
</comment>
<comment type="catalytic activity">
    <reaction evidence="1">
        <text>uroporphyrinogen III + 4 H(+) = coproporphyrinogen III + 4 CO2</text>
        <dbReference type="Rhea" id="RHEA:19865"/>
        <dbReference type="ChEBI" id="CHEBI:15378"/>
        <dbReference type="ChEBI" id="CHEBI:16526"/>
        <dbReference type="ChEBI" id="CHEBI:57308"/>
        <dbReference type="ChEBI" id="CHEBI:57309"/>
        <dbReference type="EC" id="4.1.1.37"/>
    </reaction>
</comment>
<comment type="pathway">
    <text evidence="1">Porphyrin-containing compound metabolism; protoporphyrin-IX biosynthesis; coproporphyrinogen-III from 5-aminolevulinate: step 4/4.</text>
</comment>
<comment type="subunit">
    <text evidence="1">Homodimer.</text>
</comment>
<comment type="subcellular location">
    <subcellularLocation>
        <location evidence="1">Cytoplasm</location>
    </subcellularLocation>
</comment>
<comment type="similarity">
    <text evidence="1">Belongs to the uroporphyrinogen decarboxylase family.</text>
</comment>
<protein>
    <recommendedName>
        <fullName evidence="1">Uroporphyrinogen decarboxylase</fullName>
        <shortName evidence="1">UPD</shortName>
        <shortName evidence="1">URO-D</shortName>
        <ecNumber evidence="1">4.1.1.37</ecNumber>
    </recommendedName>
</protein>
<evidence type="ECO:0000255" key="1">
    <source>
        <dbReference type="HAMAP-Rule" id="MF_00218"/>
    </source>
</evidence>
<accession>Q1R5W3</accession>
<feature type="chain" id="PRO_1000023904" description="Uroporphyrinogen decarboxylase">
    <location>
        <begin position="1"/>
        <end position="354"/>
    </location>
</feature>
<feature type="binding site" evidence="1">
    <location>
        <begin position="27"/>
        <end position="31"/>
    </location>
    <ligand>
        <name>substrate</name>
    </ligand>
</feature>
<feature type="binding site" evidence="1">
    <location>
        <position position="77"/>
    </location>
    <ligand>
        <name>substrate</name>
    </ligand>
</feature>
<feature type="binding site" evidence="1">
    <location>
        <position position="154"/>
    </location>
    <ligand>
        <name>substrate</name>
    </ligand>
</feature>
<feature type="binding site" evidence="1">
    <location>
        <position position="209"/>
    </location>
    <ligand>
        <name>substrate</name>
    </ligand>
</feature>
<feature type="binding site" evidence="1">
    <location>
        <position position="327"/>
    </location>
    <ligand>
        <name>substrate</name>
    </ligand>
</feature>
<feature type="site" description="Transition state stabilizer" evidence="1">
    <location>
        <position position="77"/>
    </location>
</feature>
<sequence>MTELKNDRYLRALLRQPVDVTPVWMMRQAGRYLPEYKATRAQAGDFMSLCKNAELACEVTLQPLRRYPLDAAILFSDILTVPDAMGLGLYFEAGEGPRFTSPVTCKADVDKLPIPDPEDELGYVMNAVRTIRRELKGEVPLIGFSGSPWTLATYMVEGGSSKAFTVIKKMMYADPQALHALLDKLAKSVTLYLNAQIKAGAQAVMIFDTWGGVLTGRDYQQFSLYYMHKIVDGLLRENDGRRVPVTLFTKGGGQWLEAMAETGCDALGLDWTTDIADARRRVGNKVALQGNMDPSMLYAPPARIEEEVASILAGFGHGEGHVFNLGHGIHQDVPPEHAGVFVEAVHRLSEQYHR</sequence>